<protein>
    <recommendedName>
        <fullName evidence="1">Large ribosomal subunit protein bL12</fullName>
    </recommendedName>
    <alternativeName>
        <fullName evidence="2">50S ribosomal protein L7/L12</fullName>
    </alternativeName>
</protein>
<name>RL7_FLAPJ</name>
<dbReference type="EMBL" id="AM398681">
    <property type="protein sequence ID" value="CAL43264.1"/>
    <property type="molecule type" value="Genomic_DNA"/>
</dbReference>
<dbReference type="RefSeq" id="WP_011963313.1">
    <property type="nucleotide sequence ID" value="NC_009613.3"/>
</dbReference>
<dbReference type="RefSeq" id="YP_001296075.1">
    <property type="nucleotide sequence ID" value="NC_009613.3"/>
</dbReference>
<dbReference type="SMR" id="A6GYU1"/>
<dbReference type="STRING" id="402612.FP1177"/>
<dbReference type="EnsemblBacteria" id="CAL43264">
    <property type="protein sequence ID" value="CAL43264"/>
    <property type="gene ID" value="FP1177"/>
</dbReference>
<dbReference type="GeneID" id="66553081"/>
<dbReference type="KEGG" id="fps:FP1177"/>
<dbReference type="PATRIC" id="fig|402612.5.peg.1194"/>
<dbReference type="eggNOG" id="COG0222">
    <property type="taxonomic scope" value="Bacteria"/>
</dbReference>
<dbReference type="HOGENOM" id="CLU_086499_3_1_10"/>
<dbReference type="OrthoDB" id="9811748at2"/>
<dbReference type="Proteomes" id="UP000006394">
    <property type="component" value="Chromosome"/>
</dbReference>
<dbReference type="GO" id="GO:0022625">
    <property type="term" value="C:cytosolic large ribosomal subunit"/>
    <property type="evidence" value="ECO:0007669"/>
    <property type="project" value="TreeGrafter"/>
</dbReference>
<dbReference type="GO" id="GO:0003729">
    <property type="term" value="F:mRNA binding"/>
    <property type="evidence" value="ECO:0007669"/>
    <property type="project" value="TreeGrafter"/>
</dbReference>
<dbReference type="GO" id="GO:0003735">
    <property type="term" value="F:structural constituent of ribosome"/>
    <property type="evidence" value="ECO:0007669"/>
    <property type="project" value="InterPro"/>
</dbReference>
<dbReference type="GO" id="GO:0006412">
    <property type="term" value="P:translation"/>
    <property type="evidence" value="ECO:0007669"/>
    <property type="project" value="UniProtKB-UniRule"/>
</dbReference>
<dbReference type="CDD" id="cd00387">
    <property type="entry name" value="Ribosomal_L7_L12"/>
    <property type="match status" value="1"/>
</dbReference>
<dbReference type="FunFam" id="3.30.1390.10:FF:000001">
    <property type="entry name" value="50S ribosomal protein L7/L12"/>
    <property type="match status" value="1"/>
</dbReference>
<dbReference type="Gene3D" id="3.30.1390.10">
    <property type="match status" value="1"/>
</dbReference>
<dbReference type="Gene3D" id="1.20.5.710">
    <property type="entry name" value="Single helix bin"/>
    <property type="match status" value="1"/>
</dbReference>
<dbReference type="HAMAP" id="MF_00368">
    <property type="entry name" value="Ribosomal_bL12"/>
    <property type="match status" value="1"/>
</dbReference>
<dbReference type="InterPro" id="IPR000206">
    <property type="entry name" value="Ribosomal_bL12"/>
</dbReference>
<dbReference type="InterPro" id="IPR013823">
    <property type="entry name" value="Ribosomal_bL12_C"/>
</dbReference>
<dbReference type="InterPro" id="IPR014719">
    <property type="entry name" value="Ribosomal_bL12_C/ClpS-like"/>
</dbReference>
<dbReference type="InterPro" id="IPR008932">
    <property type="entry name" value="Ribosomal_bL12_oligo"/>
</dbReference>
<dbReference type="InterPro" id="IPR036235">
    <property type="entry name" value="Ribosomal_bL12_oligo_N_sf"/>
</dbReference>
<dbReference type="NCBIfam" id="TIGR00855">
    <property type="entry name" value="L12"/>
    <property type="match status" value="1"/>
</dbReference>
<dbReference type="PANTHER" id="PTHR45987">
    <property type="entry name" value="39S RIBOSOMAL PROTEIN L12"/>
    <property type="match status" value="1"/>
</dbReference>
<dbReference type="PANTHER" id="PTHR45987:SF4">
    <property type="entry name" value="LARGE RIBOSOMAL SUBUNIT PROTEIN BL12M"/>
    <property type="match status" value="1"/>
</dbReference>
<dbReference type="Pfam" id="PF00542">
    <property type="entry name" value="Ribosomal_L12"/>
    <property type="match status" value="1"/>
</dbReference>
<dbReference type="Pfam" id="PF16320">
    <property type="entry name" value="Ribosomal_L12_N"/>
    <property type="match status" value="1"/>
</dbReference>
<dbReference type="SUPFAM" id="SSF54736">
    <property type="entry name" value="ClpS-like"/>
    <property type="match status" value="1"/>
</dbReference>
<dbReference type="SUPFAM" id="SSF48300">
    <property type="entry name" value="Ribosomal protein L7/12, oligomerisation (N-terminal) domain"/>
    <property type="match status" value="1"/>
</dbReference>
<reference key="1">
    <citation type="journal article" date="2007" name="Nat. Biotechnol.">
        <title>Complete genome sequence of the fish pathogen Flavobacterium psychrophilum.</title>
        <authorList>
            <person name="Duchaud E."/>
            <person name="Boussaha M."/>
            <person name="Loux V."/>
            <person name="Bernardet J.-F."/>
            <person name="Michel C."/>
            <person name="Kerouault B."/>
            <person name="Mondot S."/>
            <person name="Nicolas P."/>
            <person name="Bossy R."/>
            <person name="Caron C."/>
            <person name="Bessieres P."/>
            <person name="Gibrat J.-F."/>
            <person name="Claverol S."/>
            <person name="Dumetz F."/>
            <person name="Le Henaff M."/>
            <person name="Benmansour A."/>
        </authorList>
    </citation>
    <scope>NUCLEOTIDE SEQUENCE [LARGE SCALE GENOMIC DNA]</scope>
    <source>
        <strain>ATCC 49511 / DSM 21280 / CIP 103535 / JIP02/86</strain>
    </source>
</reference>
<comment type="function">
    <text evidence="1">Forms part of the ribosomal stalk which helps the ribosome interact with GTP-bound translation factors. Is thus essential for accurate translation.</text>
</comment>
<comment type="subunit">
    <text evidence="1">Homodimer. Part of the ribosomal stalk of the 50S ribosomal subunit. Forms a multimeric L10(L12)X complex, where L10 forms an elongated spine to which 2 to 4 L12 dimers bind in a sequential fashion. Binds GTP-bound translation factors.</text>
</comment>
<comment type="similarity">
    <text evidence="1">Belongs to the bacterial ribosomal protein bL12 family.</text>
</comment>
<accession>A6GYU1</accession>
<feature type="chain" id="PRO_1000007005" description="Large ribosomal subunit protein bL12">
    <location>
        <begin position="1"/>
        <end position="122"/>
    </location>
</feature>
<gene>
    <name evidence="1" type="primary">rplL</name>
    <name type="ordered locus">FP1177</name>
</gene>
<keyword id="KW-1185">Reference proteome</keyword>
<keyword id="KW-0687">Ribonucleoprotein</keyword>
<keyword id="KW-0689">Ribosomal protein</keyword>
<sequence length="122" mass="12681">MADLKQFAEQLVNLTVKEVNDLATILKDEYGIEPAAAAVVMQAGGGEAAEEAQTEFTVVLKEAGASKLAVVKAVKELTGLGLKEAKDLVDAAPSNVKEGVSKDEAEGLKKSLEEAGAVVELK</sequence>
<organism>
    <name type="scientific">Flavobacterium psychrophilum (strain ATCC 49511 / DSM 21280 / CIP 103535 / JIP02/86)</name>
    <dbReference type="NCBI Taxonomy" id="402612"/>
    <lineage>
        <taxon>Bacteria</taxon>
        <taxon>Pseudomonadati</taxon>
        <taxon>Bacteroidota</taxon>
        <taxon>Flavobacteriia</taxon>
        <taxon>Flavobacteriales</taxon>
        <taxon>Flavobacteriaceae</taxon>
        <taxon>Flavobacterium</taxon>
    </lineage>
</organism>
<evidence type="ECO:0000255" key="1">
    <source>
        <dbReference type="HAMAP-Rule" id="MF_00368"/>
    </source>
</evidence>
<evidence type="ECO:0000305" key="2"/>
<proteinExistence type="inferred from homology"/>